<accession>O00602</accession>
<accession>Q5VYV5</accession>
<accession>Q92596</accession>
<organism>
    <name type="scientific">Homo sapiens</name>
    <name type="common">Human</name>
    <dbReference type="NCBI Taxonomy" id="9606"/>
    <lineage>
        <taxon>Eukaryota</taxon>
        <taxon>Metazoa</taxon>
        <taxon>Chordata</taxon>
        <taxon>Craniata</taxon>
        <taxon>Vertebrata</taxon>
        <taxon>Euteleostomi</taxon>
        <taxon>Mammalia</taxon>
        <taxon>Eutheria</taxon>
        <taxon>Euarchontoglires</taxon>
        <taxon>Primates</taxon>
        <taxon>Haplorrhini</taxon>
        <taxon>Catarrhini</taxon>
        <taxon>Hominidae</taxon>
        <taxon>Homo</taxon>
    </lineage>
</organism>
<name>FCN1_HUMAN</name>
<keyword id="KW-0002">3D-structure</keyword>
<keyword id="KW-0106">Calcium</keyword>
<keyword id="KW-1003">Cell membrane</keyword>
<keyword id="KW-0176">Collagen</keyword>
<keyword id="KW-0903">Direct protein sequencing</keyword>
<keyword id="KW-1015">Disulfide bond</keyword>
<keyword id="KW-0325">Glycoprotein</keyword>
<keyword id="KW-0391">Immunity</keyword>
<keyword id="KW-0399">Innate immunity</keyword>
<keyword id="KW-0430">Lectin</keyword>
<keyword id="KW-0472">Membrane</keyword>
<keyword id="KW-0479">Metal-binding</keyword>
<keyword id="KW-1267">Proteomics identification</keyword>
<keyword id="KW-1185">Reference proteome</keyword>
<keyword id="KW-0677">Repeat</keyword>
<keyword id="KW-0964">Secreted</keyword>
<keyword id="KW-0732">Signal</keyword>
<gene>
    <name type="primary">FCN1</name>
    <name type="synonym">FCNM</name>
</gene>
<sequence length="326" mass="35078">MELSGATMARGLAVLLVLFLHIKNLPAQAADTCPEVKVVGLEGSDKLTILRGCPGLPGAPGPKGEAGVIGERGERGLPGAPGKAGPVGPKGDRGEKGMRGEKGDAGQSQSCATGPRNCKDLLDRGYFLSGWHTIYLPDCRPLTVLCDMDTDGGGWTVFQRRMDGSVDFYRDWAAYKQGFGSQLGEFWLGNDNIHALTAQGSSELRVDLVDFEGNHQFAKYKSFKVADEAEKYKLVLGAFVGGSAGNSLTGHNNNFFSTKDQDNDVSSSNCAEKFQGAWWYADCHASNLNGLYLMGPHESYANGINWSAAKGYKYSYKVSEMKVRPA</sequence>
<dbReference type="EMBL" id="S80990">
    <property type="protein sequence ID" value="AAB50706.1"/>
    <property type="molecule type" value="mRNA"/>
</dbReference>
<dbReference type="EMBL" id="AK314867">
    <property type="protein sequence ID" value="BAG37382.1"/>
    <property type="molecule type" value="mRNA"/>
</dbReference>
<dbReference type="EMBL" id="AL353611">
    <property type="status" value="NOT_ANNOTATED_CDS"/>
    <property type="molecule type" value="Genomic_DNA"/>
</dbReference>
<dbReference type="EMBL" id="CH471090">
    <property type="protein sequence ID" value="EAW88137.1"/>
    <property type="molecule type" value="Genomic_DNA"/>
</dbReference>
<dbReference type="EMBL" id="BC020635">
    <property type="protein sequence ID" value="AAH20635.1"/>
    <property type="molecule type" value="mRNA"/>
</dbReference>
<dbReference type="EMBL" id="D83920">
    <property type="protein sequence ID" value="BAA12120.1"/>
    <property type="status" value="ALT_INIT"/>
    <property type="molecule type" value="mRNA"/>
</dbReference>
<dbReference type="CCDS" id="CCDS6985.1"/>
<dbReference type="PIR" id="S61517">
    <property type="entry name" value="S61517"/>
</dbReference>
<dbReference type="RefSeq" id="NP_001994.2">
    <property type="nucleotide sequence ID" value="NM_002003.4"/>
</dbReference>
<dbReference type="PDB" id="2D39">
    <property type="method" value="X-ray"/>
    <property type="resolution" value="1.90 A"/>
    <property type="chains" value="A/B/C=115-326"/>
</dbReference>
<dbReference type="PDB" id="2JHH">
    <property type="method" value="X-ray"/>
    <property type="resolution" value="1.70 A"/>
    <property type="chains" value="C/F=109-326"/>
</dbReference>
<dbReference type="PDB" id="2JHI">
    <property type="method" value="X-ray"/>
    <property type="resolution" value="1.80 A"/>
    <property type="chains" value="F=109-326"/>
</dbReference>
<dbReference type="PDB" id="2JHK">
    <property type="method" value="X-ray"/>
    <property type="resolution" value="1.75 A"/>
    <property type="chains" value="F=109-326"/>
</dbReference>
<dbReference type="PDB" id="2JHL">
    <property type="method" value="X-ray"/>
    <property type="resolution" value="1.75 A"/>
    <property type="chains" value="F=109-326"/>
</dbReference>
<dbReference type="PDB" id="2JHM">
    <property type="method" value="X-ray"/>
    <property type="resolution" value="1.52 A"/>
    <property type="chains" value="F=109-326"/>
</dbReference>
<dbReference type="PDB" id="2WNP">
    <property type="method" value="X-ray"/>
    <property type="resolution" value="1.21 A"/>
    <property type="chains" value="F=110-326"/>
</dbReference>
<dbReference type="PDBsum" id="2D39"/>
<dbReference type="PDBsum" id="2JHH"/>
<dbReference type="PDBsum" id="2JHI"/>
<dbReference type="PDBsum" id="2JHK"/>
<dbReference type="PDBsum" id="2JHL"/>
<dbReference type="PDBsum" id="2JHM"/>
<dbReference type="PDBsum" id="2WNP"/>
<dbReference type="BMRB" id="O00602"/>
<dbReference type="SMR" id="O00602"/>
<dbReference type="BioGRID" id="108513">
    <property type="interactions" value="36"/>
</dbReference>
<dbReference type="ComplexPortal" id="CPX-6172">
    <property type="entry name" value="FCN1-MASP1 lectin-protease complex"/>
</dbReference>
<dbReference type="ComplexPortal" id="CPX-6237">
    <property type="entry name" value="FCN1-MASP2 lectin-protease complex"/>
</dbReference>
<dbReference type="FunCoup" id="O00602">
    <property type="interactions" value="53"/>
</dbReference>
<dbReference type="IntAct" id="O00602">
    <property type="interactions" value="70"/>
</dbReference>
<dbReference type="MINT" id="O00602"/>
<dbReference type="STRING" id="9606.ENSP00000360871"/>
<dbReference type="UniLectin" id="O00602"/>
<dbReference type="GlyCosmos" id="O00602">
    <property type="glycosylation" value="1 site, No reported glycans"/>
</dbReference>
<dbReference type="GlyGen" id="O00602">
    <property type="glycosylation" value="1 site"/>
</dbReference>
<dbReference type="PhosphoSitePlus" id="O00602"/>
<dbReference type="BioMuta" id="FCN1"/>
<dbReference type="MassIVE" id="O00602"/>
<dbReference type="PaxDb" id="9606-ENSP00000360871"/>
<dbReference type="PeptideAtlas" id="O00602"/>
<dbReference type="PRIDE" id="O00602"/>
<dbReference type="ProteomicsDB" id="47994"/>
<dbReference type="Pumba" id="O00602"/>
<dbReference type="Antibodypedia" id="602">
    <property type="antibodies" value="397 antibodies from 31 providers"/>
</dbReference>
<dbReference type="DNASU" id="2219"/>
<dbReference type="Ensembl" id="ENST00000371806.4">
    <property type="protein sequence ID" value="ENSP00000360871.3"/>
    <property type="gene ID" value="ENSG00000085265.12"/>
</dbReference>
<dbReference type="GeneID" id="2219"/>
<dbReference type="KEGG" id="hsa:2219"/>
<dbReference type="MANE-Select" id="ENST00000371806.4">
    <property type="protein sequence ID" value="ENSP00000360871.3"/>
    <property type="RefSeq nucleotide sequence ID" value="NM_002003.5"/>
    <property type="RefSeq protein sequence ID" value="NP_001994.2"/>
</dbReference>
<dbReference type="UCSC" id="uc004cfi.4">
    <property type="organism name" value="human"/>
</dbReference>
<dbReference type="AGR" id="HGNC:3623"/>
<dbReference type="CTD" id="2219"/>
<dbReference type="DisGeNET" id="2219"/>
<dbReference type="GeneCards" id="FCN1"/>
<dbReference type="HGNC" id="HGNC:3623">
    <property type="gene designation" value="FCN1"/>
</dbReference>
<dbReference type="HPA" id="ENSG00000085265">
    <property type="expression patterns" value="Group enriched (bone marrow, lung, lymphoid tissue)"/>
</dbReference>
<dbReference type="MalaCards" id="FCN1"/>
<dbReference type="MIM" id="601252">
    <property type="type" value="gene"/>
</dbReference>
<dbReference type="neXtProt" id="NX_O00602"/>
<dbReference type="OpenTargets" id="ENSG00000085265"/>
<dbReference type="PharmGKB" id="PA28069"/>
<dbReference type="VEuPathDB" id="HostDB:ENSG00000085265"/>
<dbReference type="eggNOG" id="KOG2579">
    <property type="taxonomic scope" value="Eukaryota"/>
</dbReference>
<dbReference type="GeneTree" id="ENSGT00940000157531"/>
<dbReference type="HOGENOM" id="CLU_038628_3_3_1"/>
<dbReference type="InParanoid" id="O00602"/>
<dbReference type="OMA" id="ANECENY"/>
<dbReference type="OrthoDB" id="7735550at2759"/>
<dbReference type="PAN-GO" id="O00602">
    <property type="GO annotations" value="6 GO annotations based on evolutionary models"/>
</dbReference>
<dbReference type="PhylomeDB" id="O00602"/>
<dbReference type="TreeFam" id="TF329953"/>
<dbReference type="PathwayCommons" id="O00602"/>
<dbReference type="Reactome" id="R-HSA-166662">
    <property type="pathway name" value="Lectin pathway of complement activation"/>
</dbReference>
<dbReference type="Reactome" id="R-HSA-166663">
    <property type="pathway name" value="Initial triggering of complement"/>
</dbReference>
<dbReference type="Reactome" id="R-HSA-2855086">
    <property type="pathway name" value="Ficolins bind to repetitive carbohydrate structures on the target cell surface"/>
</dbReference>
<dbReference type="Reactome" id="R-HSA-6798695">
    <property type="pathway name" value="Neutrophil degranulation"/>
</dbReference>
<dbReference type="SignaLink" id="O00602"/>
<dbReference type="BioGRID-ORCS" id="2219">
    <property type="hits" value="9 hits in 1144 CRISPR screens"/>
</dbReference>
<dbReference type="EvolutionaryTrace" id="O00602"/>
<dbReference type="GeneWiki" id="FCN1"/>
<dbReference type="GenomeRNAi" id="2219"/>
<dbReference type="Pharos" id="O00602">
    <property type="development level" value="Tbio"/>
</dbReference>
<dbReference type="PRO" id="PR:O00602"/>
<dbReference type="Proteomes" id="UP000005640">
    <property type="component" value="Chromosome 9"/>
</dbReference>
<dbReference type="RNAct" id="O00602">
    <property type="molecule type" value="protein"/>
</dbReference>
<dbReference type="Bgee" id="ENSG00000085265">
    <property type="expression patterns" value="Expressed in monocyte and 113 other cell types or tissues"/>
</dbReference>
<dbReference type="ExpressionAtlas" id="O00602">
    <property type="expression patterns" value="baseline and differential"/>
</dbReference>
<dbReference type="GO" id="GO:0005581">
    <property type="term" value="C:collagen trimer"/>
    <property type="evidence" value="ECO:0007669"/>
    <property type="project" value="UniProtKB-KW"/>
</dbReference>
<dbReference type="GO" id="GO:0062023">
    <property type="term" value="C:collagen-containing extracellular matrix"/>
    <property type="evidence" value="ECO:0007005"/>
    <property type="project" value="BHF-UCL"/>
</dbReference>
<dbReference type="GO" id="GO:0009897">
    <property type="term" value="C:external side of plasma membrane"/>
    <property type="evidence" value="ECO:0000303"/>
    <property type="project" value="ComplexPortal"/>
</dbReference>
<dbReference type="GO" id="GO:0005576">
    <property type="term" value="C:extracellular region"/>
    <property type="evidence" value="ECO:0000304"/>
    <property type="project" value="Reactome"/>
</dbReference>
<dbReference type="GO" id="GO:0005615">
    <property type="term" value="C:extracellular space"/>
    <property type="evidence" value="ECO:0000318"/>
    <property type="project" value="GO_Central"/>
</dbReference>
<dbReference type="GO" id="GO:1904813">
    <property type="term" value="C:ficolin-1-rich granule lumen"/>
    <property type="evidence" value="ECO:0000304"/>
    <property type="project" value="Reactome"/>
</dbReference>
<dbReference type="GO" id="GO:0005886">
    <property type="term" value="C:plasma membrane"/>
    <property type="evidence" value="ECO:0000314"/>
    <property type="project" value="UniProtKB"/>
</dbReference>
<dbReference type="GO" id="GO:0034774">
    <property type="term" value="C:secretory granule lumen"/>
    <property type="evidence" value="ECO:0000304"/>
    <property type="project" value="Reactome"/>
</dbReference>
<dbReference type="GO" id="GO:1905370">
    <property type="term" value="C:serine-type endopeptidase complex"/>
    <property type="evidence" value="ECO:0000314"/>
    <property type="project" value="ComplexPortal"/>
</dbReference>
<dbReference type="GO" id="GO:0003823">
    <property type="term" value="F:antigen binding"/>
    <property type="evidence" value="ECO:0000318"/>
    <property type="project" value="GO_Central"/>
</dbReference>
<dbReference type="GO" id="GO:0030246">
    <property type="term" value="F:carbohydrate binding"/>
    <property type="evidence" value="ECO:0007669"/>
    <property type="project" value="UniProtKB-KW"/>
</dbReference>
<dbReference type="GO" id="GO:0097367">
    <property type="term" value="F:carbohydrate derivative binding"/>
    <property type="evidence" value="ECO:0000318"/>
    <property type="project" value="GO_Central"/>
</dbReference>
<dbReference type="GO" id="GO:0001664">
    <property type="term" value="F:G protein-coupled receptor binding"/>
    <property type="evidence" value="ECO:0000353"/>
    <property type="project" value="UniProtKB"/>
</dbReference>
<dbReference type="GO" id="GO:0046872">
    <property type="term" value="F:metal ion binding"/>
    <property type="evidence" value="ECO:0007669"/>
    <property type="project" value="UniProtKB-KW"/>
</dbReference>
<dbReference type="GO" id="GO:0038187">
    <property type="term" value="F:pattern recognition receptor activity"/>
    <property type="evidence" value="ECO:0000315"/>
    <property type="project" value="UniProtKB"/>
</dbReference>
<dbReference type="GO" id="GO:0033691">
    <property type="term" value="F:sialic acid binding"/>
    <property type="evidence" value="ECO:0000314"/>
    <property type="project" value="UniProtKB"/>
</dbReference>
<dbReference type="GO" id="GO:0005102">
    <property type="term" value="F:signaling receptor binding"/>
    <property type="evidence" value="ECO:0000318"/>
    <property type="project" value="GO_Central"/>
</dbReference>
<dbReference type="GO" id="GO:0002752">
    <property type="term" value="P:cell surface pattern recognition receptor signaling pathway"/>
    <property type="evidence" value="ECO:0000315"/>
    <property type="project" value="UniProtKB"/>
</dbReference>
<dbReference type="GO" id="GO:0001867">
    <property type="term" value="P:complement activation, lectin pathway"/>
    <property type="evidence" value="ECO:0000314"/>
    <property type="project" value="ComplexPortal"/>
</dbReference>
<dbReference type="GO" id="GO:0007186">
    <property type="term" value="P:G protein-coupled receptor signaling pathway"/>
    <property type="evidence" value="ECO:0000314"/>
    <property type="project" value="UniProtKB"/>
</dbReference>
<dbReference type="GO" id="GO:0046597">
    <property type="term" value="P:host-mediated suppression of symbiont invasion"/>
    <property type="evidence" value="ECO:0000314"/>
    <property type="project" value="UniProtKB"/>
</dbReference>
<dbReference type="GO" id="GO:0032757">
    <property type="term" value="P:positive regulation of interleukin-8 production"/>
    <property type="evidence" value="ECO:0000315"/>
    <property type="project" value="UniProtKB"/>
</dbReference>
<dbReference type="GO" id="GO:1903028">
    <property type="term" value="P:positive regulation of opsonization"/>
    <property type="evidence" value="ECO:0000314"/>
    <property type="project" value="ComplexPortal"/>
</dbReference>
<dbReference type="GO" id="GO:0034394">
    <property type="term" value="P:protein localization to cell surface"/>
    <property type="evidence" value="ECO:0000314"/>
    <property type="project" value="UniProtKB"/>
</dbReference>
<dbReference type="GO" id="GO:0006508">
    <property type="term" value="P:proteolysis"/>
    <property type="evidence" value="ECO:0000314"/>
    <property type="project" value="ComplexPortal"/>
</dbReference>
<dbReference type="GO" id="GO:0043654">
    <property type="term" value="P:recognition of apoptotic cell"/>
    <property type="evidence" value="ECO:0000314"/>
    <property type="project" value="UniProtKB"/>
</dbReference>
<dbReference type="CDD" id="cd00087">
    <property type="entry name" value="FReD"/>
    <property type="match status" value="1"/>
</dbReference>
<dbReference type="FunFam" id="3.90.215.10:FF:000001">
    <property type="entry name" value="Tenascin isoform 1"/>
    <property type="match status" value="1"/>
</dbReference>
<dbReference type="Gene3D" id="3.90.215.10">
    <property type="entry name" value="Gamma Fibrinogen, chain A, domain 1"/>
    <property type="match status" value="1"/>
</dbReference>
<dbReference type="InterPro" id="IPR008160">
    <property type="entry name" value="Collagen"/>
</dbReference>
<dbReference type="InterPro" id="IPR036056">
    <property type="entry name" value="Fibrinogen-like_C"/>
</dbReference>
<dbReference type="InterPro" id="IPR014716">
    <property type="entry name" value="Fibrinogen_a/b/g_C_1"/>
</dbReference>
<dbReference type="InterPro" id="IPR002181">
    <property type="entry name" value="Fibrinogen_a/b/g_C_dom"/>
</dbReference>
<dbReference type="InterPro" id="IPR050373">
    <property type="entry name" value="Fibrinogen_C-term_domain"/>
</dbReference>
<dbReference type="InterPro" id="IPR020837">
    <property type="entry name" value="Fibrinogen_CS"/>
</dbReference>
<dbReference type="NCBIfam" id="NF040941">
    <property type="entry name" value="GGGWT_bact"/>
    <property type="match status" value="1"/>
</dbReference>
<dbReference type="PANTHER" id="PTHR19143">
    <property type="entry name" value="FIBRINOGEN/TENASCIN/ANGIOPOEITIN"/>
    <property type="match status" value="1"/>
</dbReference>
<dbReference type="PANTHER" id="PTHR19143:SF377">
    <property type="entry name" value="FICOLIN-1"/>
    <property type="match status" value="1"/>
</dbReference>
<dbReference type="Pfam" id="PF01391">
    <property type="entry name" value="Collagen"/>
    <property type="match status" value="1"/>
</dbReference>
<dbReference type="Pfam" id="PF00147">
    <property type="entry name" value="Fibrinogen_C"/>
    <property type="match status" value="1"/>
</dbReference>
<dbReference type="SMART" id="SM00186">
    <property type="entry name" value="FBG"/>
    <property type="match status" value="1"/>
</dbReference>
<dbReference type="SUPFAM" id="SSF56496">
    <property type="entry name" value="Fibrinogen C-terminal domain-like"/>
    <property type="match status" value="1"/>
</dbReference>
<dbReference type="PROSITE" id="PS00514">
    <property type="entry name" value="FIBRINOGEN_C_1"/>
    <property type="match status" value="1"/>
</dbReference>
<dbReference type="PROSITE" id="PS51406">
    <property type="entry name" value="FIBRINOGEN_C_2"/>
    <property type="match status" value="1"/>
</dbReference>
<proteinExistence type="evidence at protein level"/>
<protein>
    <recommendedName>
        <fullName>Ficolin-1</fullName>
    </recommendedName>
    <alternativeName>
        <fullName>Collagen/fibrinogen domain-containing protein 1</fullName>
    </alternativeName>
    <alternativeName>
        <fullName>Ficolin-A</fullName>
    </alternativeName>
    <alternativeName>
        <fullName>Ficolin-alpha</fullName>
    </alternativeName>
    <alternativeName>
        <fullName>M-ficolin</fullName>
    </alternativeName>
</protein>
<feature type="signal peptide" evidence="4">
    <location>
        <begin position="1"/>
        <end position="29"/>
    </location>
</feature>
<feature type="chain" id="PRO_0000009136" description="Ficolin-1">
    <location>
        <begin position="30"/>
        <end position="326"/>
    </location>
</feature>
<feature type="domain" description="Collagen-like">
    <location>
        <begin position="55"/>
        <end position="93"/>
    </location>
</feature>
<feature type="domain" description="Fibrinogen C-terminal" evidence="2">
    <location>
        <begin position="109"/>
        <end position="326"/>
    </location>
</feature>
<feature type="region of interest" description="Disordered" evidence="3">
    <location>
        <begin position="72"/>
        <end position="111"/>
    </location>
</feature>
<feature type="region of interest" description="A domain; contributes to trimerization">
    <location>
        <begin position="115"/>
        <end position="154"/>
    </location>
</feature>
<feature type="region of interest" description="B domain; contributes to trimerization">
    <location>
        <begin position="155"/>
        <end position="243"/>
    </location>
</feature>
<feature type="region of interest" description="P domain" evidence="11">
    <location>
        <begin position="317"/>
        <end position="326"/>
    </location>
</feature>
<feature type="compositionally biased region" description="Low complexity" evidence="3">
    <location>
        <begin position="77"/>
        <end position="89"/>
    </location>
</feature>
<feature type="compositionally biased region" description="Basic and acidic residues" evidence="3">
    <location>
        <begin position="90"/>
        <end position="104"/>
    </location>
</feature>
<feature type="binding site" evidence="6 7 8 15 16">
    <location>
        <position position="262"/>
    </location>
    <ligand>
        <name>Ca(2+)</name>
        <dbReference type="ChEBI" id="CHEBI:29108"/>
    </ligand>
</feature>
<feature type="binding site" evidence="6 7 8 15 16">
    <location>
        <position position="264"/>
    </location>
    <ligand>
        <name>Ca(2+)</name>
        <dbReference type="ChEBI" id="CHEBI:29108"/>
    </ligand>
</feature>
<feature type="binding site" evidence="6 7 8 15 16">
    <location>
        <position position="266"/>
    </location>
    <ligand>
        <name>Ca(2+)</name>
        <dbReference type="ChEBI" id="CHEBI:29108"/>
    </ligand>
</feature>
<feature type="binding site" evidence="6 7 8 15 16">
    <location>
        <position position="268"/>
    </location>
    <ligand>
        <name>Ca(2+)</name>
        <dbReference type="ChEBI" id="CHEBI:29108"/>
    </ligand>
</feature>
<feature type="binding site" evidence="7">
    <location>
        <begin position="282"/>
        <end position="284"/>
    </location>
    <ligand>
        <name>a carbohydrate</name>
        <dbReference type="ChEBI" id="CHEBI:16646"/>
    </ligand>
</feature>
<feature type="site" description="Mediates specificity for sialic acids" evidence="13 14">
    <location>
        <position position="300"/>
    </location>
</feature>
<feature type="site" description="Mediates specificity for sialic acids" evidence="13">
    <location>
        <position position="312"/>
    </location>
</feature>
<feature type="glycosylation site" description="N-linked (GlcNAc...) asparagine" evidence="1">
    <location>
        <position position="305"/>
    </location>
</feature>
<feature type="disulfide bond" evidence="7 8 16">
    <location>
        <begin position="111"/>
        <end position="139"/>
    </location>
</feature>
<feature type="disulfide bond" evidence="6 7 8 16">
    <location>
        <begin position="118"/>
        <end position="146"/>
    </location>
</feature>
<feature type="disulfide bond" evidence="6 7 8 16">
    <location>
        <begin position="270"/>
        <end position="283"/>
    </location>
</feature>
<feature type="sequence variant" id="VAR_061172" description="In dbSNP:rs56345770.">
    <original>R</original>
    <variation>Q</variation>
    <location>
        <position position="93"/>
    </location>
</feature>
<feature type="sequence variant" id="VAR_024450" description="In dbSNP:rs771359747.">
    <original>Y</original>
    <variation>H</variation>
    <location>
        <position position="126"/>
    </location>
</feature>
<feature type="sequence variant" id="VAR_036341" description="In a colorectal cancer sample; somatic mutation." evidence="5">
    <original>Y</original>
    <variation>C</variation>
    <location>
        <position position="175"/>
    </location>
</feature>
<feature type="mutagenesis site" description="Inhibits binding to the 9-O-acetylated sialic acid derivatives." evidence="8">
    <original>G</original>
    <variation>F</variation>
    <location>
        <position position="250"/>
    </location>
</feature>
<feature type="mutagenesis site" description="Inhibits binding to the 9-O-acetylated sialic acid derivatives." evidence="8">
    <original>A</original>
    <variation>V</variation>
    <location>
        <position position="285"/>
    </location>
</feature>
<feature type="mutagenesis site" description="Abolishes interaction with all sialic acid-containing glycans." evidence="8">
    <original>Y</original>
    <variation>F</variation>
    <location>
        <position position="300"/>
    </location>
</feature>
<feature type="sequence conflict" description="In Ref. 1; AAB50706." evidence="12" ref="1">
    <original>T</original>
    <variation>N</variation>
    <location>
        <position position="133"/>
    </location>
</feature>
<feature type="sequence conflict" description="In Ref. 1; AAB50706." evidence="12" ref="1">
    <original>N</original>
    <variation>S</variation>
    <location>
        <position position="287"/>
    </location>
</feature>
<feature type="turn" evidence="19">
    <location>
        <begin position="111"/>
        <end position="113"/>
    </location>
</feature>
<feature type="helix" evidence="19">
    <location>
        <begin position="118"/>
        <end position="123"/>
    </location>
</feature>
<feature type="strand" evidence="19">
    <location>
        <begin position="130"/>
        <end position="135"/>
    </location>
</feature>
<feature type="strand" evidence="19">
    <location>
        <begin position="141"/>
        <end position="147"/>
    </location>
</feature>
<feature type="helix" evidence="19">
    <location>
        <begin position="150"/>
        <end position="152"/>
    </location>
</feature>
<feature type="strand" evidence="19">
    <location>
        <begin position="155"/>
        <end position="164"/>
    </location>
</feature>
<feature type="helix" evidence="19">
    <location>
        <begin position="172"/>
        <end position="177"/>
    </location>
</feature>
<feature type="strand" evidence="17">
    <location>
        <begin position="179"/>
        <end position="181"/>
    </location>
</feature>
<feature type="helix" evidence="19">
    <location>
        <begin position="190"/>
        <end position="198"/>
    </location>
</feature>
<feature type="strand" evidence="19">
    <location>
        <begin position="202"/>
        <end position="209"/>
    </location>
</feature>
<feature type="strand" evidence="19">
    <location>
        <begin position="215"/>
        <end position="221"/>
    </location>
</feature>
<feature type="strand" evidence="19">
    <location>
        <begin position="223"/>
        <end position="225"/>
    </location>
</feature>
<feature type="helix" evidence="19">
    <location>
        <begin position="228"/>
        <end position="230"/>
    </location>
</feature>
<feature type="strand" evidence="19">
    <location>
        <begin position="234"/>
        <end position="236"/>
    </location>
</feature>
<feature type="strand" evidence="19">
    <location>
        <begin position="239"/>
        <end position="241"/>
    </location>
</feature>
<feature type="helix" evidence="19">
    <location>
        <begin position="249"/>
        <end position="251"/>
    </location>
</feature>
<feature type="strand" evidence="19">
    <location>
        <begin position="264"/>
        <end position="268"/>
    </location>
</feature>
<feature type="helix" evidence="19">
    <location>
        <begin position="270"/>
        <end position="273"/>
    </location>
</feature>
<feature type="strand" evidence="19">
    <location>
        <begin position="281"/>
        <end position="283"/>
    </location>
</feature>
<feature type="strand" evidence="19">
    <location>
        <begin position="285"/>
        <end position="287"/>
    </location>
</feature>
<feature type="strand" evidence="19">
    <location>
        <begin position="298"/>
        <end position="301"/>
    </location>
</feature>
<feature type="strand" evidence="19">
    <location>
        <begin position="303"/>
        <end position="306"/>
    </location>
</feature>
<feature type="turn" evidence="19">
    <location>
        <begin position="307"/>
        <end position="309"/>
    </location>
</feature>
<feature type="strand" evidence="18">
    <location>
        <begin position="312"/>
        <end position="315"/>
    </location>
</feature>
<feature type="strand" evidence="19">
    <location>
        <begin position="317"/>
        <end position="325"/>
    </location>
</feature>
<evidence type="ECO:0000255" key="1"/>
<evidence type="ECO:0000255" key="2">
    <source>
        <dbReference type="PROSITE-ProRule" id="PRU00739"/>
    </source>
</evidence>
<evidence type="ECO:0000256" key="3">
    <source>
        <dbReference type="SAM" id="MobiDB-lite"/>
    </source>
</evidence>
<evidence type="ECO:0000269" key="4">
    <source>
    </source>
</evidence>
<evidence type="ECO:0000269" key="5">
    <source>
    </source>
</evidence>
<evidence type="ECO:0000269" key="6">
    <source>
    </source>
</evidence>
<evidence type="ECO:0000269" key="7">
    <source>
    </source>
</evidence>
<evidence type="ECO:0000269" key="8">
    <source>
    </source>
</evidence>
<evidence type="ECO:0000269" key="9">
    <source>
    </source>
</evidence>
<evidence type="ECO:0000269" key="10">
    <source>
    </source>
</evidence>
<evidence type="ECO:0000303" key="11">
    <source>
    </source>
</evidence>
<evidence type="ECO:0000305" key="12"/>
<evidence type="ECO:0000305" key="13">
    <source>
    </source>
</evidence>
<evidence type="ECO:0000305" key="14">
    <source>
    </source>
</evidence>
<evidence type="ECO:0007744" key="15">
    <source>
        <dbReference type="PDB" id="2D39"/>
    </source>
</evidence>
<evidence type="ECO:0007744" key="16">
    <source>
        <dbReference type="PDB" id="2WNP"/>
    </source>
</evidence>
<evidence type="ECO:0007829" key="17">
    <source>
        <dbReference type="PDB" id="2D39"/>
    </source>
</evidence>
<evidence type="ECO:0007829" key="18">
    <source>
        <dbReference type="PDB" id="2JHK"/>
    </source>
</evidence>
<evidence type="ECO:0007829" key="19">
    <source>
        <dbReference type="PDB" id="2WNP"/>
    </source>
</evidence>
<comment type="function">
    <text evidence="8 10">Extracellular lectin functioning as a pattern-recognition receptor in innate immunity. Binds the sugar moieties of pathogen-associated molecular patterns (PAMPs) displayed on microbes and activates the lectin pathway of the complement system. May also activate monocytes through a G protein-coupled receptor, FFAR2, inducing the secretion of interleukin-8/IL-8 (PubMed:21037097). Binds preferentially to 9-O-acetylated 2-6-linked sialic acid derivatives and to various glycans containing sialic acid engaged in a 2-3 linkage.</text>
</comment>
<comment type="subunit">
    <text evidence="6 7 8 10">Homotrimer (PubMed:17897951). Interacts with elastin/ELN. Interacts (via Fibrinogen C-terminal domain) with FFAR2. Interacts with CRP; may regulate monocyte activation by FCN1.</text>
</comment>
<comment type="interaction">
    <interactant intactId="EBI-5282479">
        <id>O00602</id>
    </interactant>
    <interactant intactId="EBI-1395983">
        <id>P02741</id>
        <label>CRP</label>
    </interactant>
    <organismsDiffer>false</organismsDiffer>
    <experiments>4</experiments>
</comment>
<comment type="interaction">
    <interactant intactId="EBI-5282479">
        <id>O00602</id>
    </interactant>
    <interactant intactId="EBI-11574553">
        <id>P26022</id>
        <label>PTX3</label>
    </interactant>
    <organismsDiffer>false</organismsDiffer>
    <experiments>3</experiments>
</comment>
<comment type="interaction">
    <interactant intactId="EBI-5282479">
        <id>O00602</id>
    </interactant>
    <interactant intactId="EBI-7468648">
        <id>Q2TS39</id>
        <label>CRP-1</label>
    </interactant>
    <organismsDiffer>true</organismsDiffer>
    <experiments>3</experiments>
</comment>
<comment type="interaction">
    <interactant intactId="EBI-11784425">
        <id>PRO_0000009136</id>
    </interactant>
    <interactant intactId="EBI-2833872">
        <id>O15552</id>
        <label>FFAR2</label>
    </interactant>
    <organismsDiffer>false</organismsDiffer>
    <experiments>7</experiments>
</comment>
<comment type="interaction">
    <interactant intactId="EBI-11784425">
        <id>PRO_0000009136</id>
    </interactant>
    <interactant intactId="EBI-11574553">
        <id>P26022</id>
        <label>PTX3</label>
    </interactant>
    <organismsDiffer>false</organismsDiffer>
    <experiments>7</experiments>
</comment>
<comment type="interaction">
    <interactant intactId="EBI-11784425">
        <id>PRO_0000009136</id>
    </interactant>
    <interactant intactId="EBI-2296927">
        <id>P02769</id>
        <label>ALB</label>
    </interactant>
    <organismsDiffer>true</organismsDiffer>
    <experiments>2</experiments>
</comment>
<comment type="interaction">
    <interactant intactId="EBI-11784425">
        <id>PRO_0000009136</id>
    </interactant>
    <interactant intactId="EBI-26878164">
        <id>PRO_0000000214</id>
        <label>fbpA</label>
        <dbReference type="UniProtKB" id="P9WQP3"/>
    </interactant>
    <organismsDiffer>true</organismsDiffer>
    <experiments>2</experiments>
</comment>
<comment type="interaction">
    <interactant intactId="EBI-11784425">
        <id>PRO_0000009136</id>
    </interactant>
    <interactant intactId="EBI-26878221">
        <id>P9WQP1</id>
        <label>fbpB</label>
    </interactant>
    <organismsDiffer>true</organismsDiffer>
    <experiments>3</experiments>
</comment>
<comment type="subcellular location">
    <subcellularLocation>
        <location evidence="9 10">Secreted</location>
    </subcellularLocation>
    <subcellularLocation>
        <location evidence="9 10">Cell membrane</location>
        <topology evidence="9 10">Peripheral membrane protein</topology>
        <orientation evidence="9 10">Extracellular side</orientation>
    </subcellularLocation>
    <text>Found on the monocyte and granulocyte surface (PubMed:20400674).</text>
</comment>
<comment type="tissue specificity">
    <text evidence="9">Peripheral blood leukocytes, monocytes and granulocytes. Also detected in spleen, lung, and thymus, may be due to the presence of tissue macrophages or trapped blood in these tissues. Not detected on lymphocytes.</text>
</comment>
<comment type="domain">
    <text evidence="6 7">The fibrinogen C-terminal domain mediates calcium-dependent binding to carbohydrates and tethering to the cell surface in monocytes and granulocytes. The domain undergoes a conformational switch at pH under 6.2, and looses its carbohydrate-binding ability.</text>
</comment>
<comment type="similarity">
    <text evidence="12">Belongs to the ficolin lectin family.</text>
</comment>
<comment type="sequence caution" evidence="12">
    <conflict type="erroneous initiation">
        <sequence resource="EMBL-CDS" id="BAA12120"/>
    </conflict>
</comment>
<reference key="1">
    <citation type="journal article" date="1996" name="Biochem. J.">
        <title>Human ficolin: cDNA cloning, demonstration of peripheral blood leucocytes as the major site of synthesis and assignment of the gene to chromosome 9.</title>
        <authorList>
            <person name="Lu J."/>
            <person name="Tay P.N."/>
            <person name="Kon O.L."/>
            <person name="Reid K.B."/>
        </authorList>
    </citation>
    <scope>NUCLEOTIDE SEQUENCE [MRNA]</scope>
    <source>
        <tissue>Uterus</tissue>
    </source>
</reference>
<reference key="2">
    <citation type="journal article" date="2004" name="Nat. Genet.">
        <title>Complete sequencing and characterization of 21,243 full-length human cDNAs.</title>
        <authorList>
            <person name="Ota T."/>
            <person name="Suzuki Y."/>
            <person name="Nishikawa T."/>
            <person name="Otsuki T."/>
            <person name="Sugiyama T."/>
            <person name="Irie R."/>
            <person name="Wakamatsu A."/>
            <person name="Hayashi K."/>
            <person name="Sato H."/>
            <person name="Nagai K."/>
            <person name="Kimura K."/>
            <person name="Makita H."/>
            <person name="Sekine M."/>
            <person name="Obayashi M."/>
            <person name="Nishi T."/>
            <person name="Shibahara T."/>
            <person name="Tanaka T."/>
            <person name="Ishii S."/>
            <person name="Yamamoto J."/>
            <person name="Saito K."/>
            <person name="Kawai Y."/>
            <person name="Isono Y."/>
            <person name="Nakamura Y."/>
            <person name="Nagahari K."/>
            <person name="Murakami K."/>
            <person name="Yasuda T."/>
            <person name="Iwayanagi T."/>
            <person name="Wagatsuma M."/>
            <person name="Shiratori A."/>
            <person name="Sudo H."/>
            <person name="Hosoiri T."/>
            <person name="Kaku Y."/>
            <person name="Kodaira H."/>
            <person name="Kondo H."/>
            <person name="Sugawara M."/>
            <person name="Takahashi M."/>
            <person name="Kanda K."/>
            <person name="Yokoi T."/>
            <person name="Furuya T."/>
            <person name="Kikkawa E."/>
            <person name="Omura Y."/>
            <person name="Abe K."/>
            <person name="Kamihara K."/>
            <person name="Katsuta N."/>
            <person name="Sato K."/>
            <person name="Tanikawa M."/>
            <person name="Yamazaki M."/>
            <person name="Ninomiya K."/>
            <person name="Ishibashi T."/>
            <person name="Yamashita H."/>
            <person name="Murakawa K."/>
            <person name="Fujimori K."/>
            <person name="Tanai H."/>
            <person name="Kimata M."/>
            <person name="Watanabe M."/>
            <person name="Hiraoka S."/>
            <person name="Chiba Y."/>
            <person name="Ishida S."/>
            <person name="Ono Y."/>
            <person name="Takiguchi S."/>
            <person name="Watanabe S."/>
            <person name="Yosida M."/>
            <person name="Hotuta T."/>
            <person name="Kusano J."/>
            <person name="Kanehori K."/>
            <person name="Takahashi-Fujii A."/>
            <person name="Hara H."/>
            <person name="Tanase T.-O."/>
            <person name="Nomura Y."/>
            <person name="Togiya S."/>
            <person name="Komai F."/>
            <person name="Hara R."/>
            <person name="Takeuchi K."/>
            <person name="Arita M."/>
            <person name="Imose N."/>
            <person name="Musashino K."/>
            <person name="Yuuki H."/>
            <person name="Oshima A."/>
            <person name="Sasaki N."/>
            <person name="Aotsuka S."/>
            <person name="Yoshikawa Y."/>
            <person name="Matsunawa H."/>
            <person name="Ichihara T."/>
            <person name="Shiohata N."/>
            <person name="Sano S."/>
            <person name="Moriya S."/>
            <person name="Momiyama H."/>
            <person name="Satoh N."/>
            <person name="Takami S."/>
            <person name="Terashima Y."/>
            <person name="Suzuki O."/>
            <person name="Nakagawa S."/>
            <person name="Senoh A."/>
            <person name="Mizoguchi H."/>
            <person name="Goto Y."/>
            <person name="Shimizu F."/>
            <person name="Wakebe H."/>
            <person name="Hishigaki H."/>
            <person name="Watanabe T."/>
            <person name="Sugiyama A."/>
            <person name="Takemoto M."/>
            <person name="Kawakami B."/>
            <person name="Yamazaki M."/>
            <person name="Watanabe K."/>
            <person name="Kumagai A."/>
            <person name="Itakura S."/>
            <person name="Fukuzumi Y."/>
            <person name="Fujimori Y."/>
            <person name="Komiyama M."/>
            <person name="Tashiro H."/>
            <person name="Tanigami A."/>
            <person name="Fujiwara T."/>
            <person name="Ono T."/>
            <person name="Yamada K."/>
            <person name="Fujii Y."/>
            <person name="Ozaki K."/>
            <person name="Hirao M."/>
            <person name="Ohmori Y."/>
            <person name="Kawabata A."/>
            <person name="Hikiji T."/>
            <person name="Kobatake N."/>
            <person name="Inagaki H."/>
            <person name="Ikema Y."/>
            <person name="Okamoto S."/>
            <person name="Okitani R."/>
            <person name="Kawakami T."/>
            <person name="Noguchi S."/>
            <person name="Itoh T."/>
            <person name="Shigeta K."/>
            <person name="Senba T."/>
            <person name="Matsumura K."/>
            <person name="Nakajima Y."/>
            <person name="Mizuno T."/>
            <person name="Morinaga M."/>
            <person name="Sasaki M."/>
            <person name="Togashi T."/>
            <person name="Oyama M."/>
            <person name="Hata H."/>
            <person name="Watanabe M."/>
            <person name="Komatsu T."/>
            <person name="Mizushima-Sugano J."/>
            <person name="Satoh T."/>
            <person name="Shirai Y."/>
            <person name="Takahashi Y."/>
            <person name="Nakagawa K."/>
            <person name="Okumura K."/>
            <person name="Nagase T."/>
            <person name="Nomura N."/>
            <person name="Kikuchi H."/>
            <person name="Masuho Y."/>
            <person name="Yamashita R."/>
            <person name="Nakai K."/>
            <person name="Yada T."/>
            <person name="Nakamura Y."/>
            <person name="Ohara O."/>
            <person name="Isogai T."/>
            <person name="Sugano S."/>
        </authorList>
    </citation>
    <scope>NUCLEOTIDE SEQUENCE [LARGE SCALE MRNA]</scope>
</reference>
<reference key="3">
    <citation type="journal article" date="2004" name="Nature">
        <title>DNA sequence and analysis of human chromosome 9.</title>
        <authorList>
            <person name="Humphray S.J."/>
            <person name="Oliver K."/>
            <person name="Hunt A.R."/>
            <person name="Plumb R.W."/>
            <person name="Loveland J.E."/>
            <person name="Howe K.L."/>
            <person name="Andrews T.D."/>
            <person name="Searle S."/>
            <person name="Hunt S.E."/>
            <person name="Scott C.E."/>
            <person name="Jones M.C."/>
            <person name="Ainscough R."/>
            <person name="Almeida J.P."/>
            <person name="Ambrose K.D."/>
            <person name="Ashwell R.I.S."/>
            <person name="Babbage A.K."/>
            <person name="Babbage S."/>
            <person name="Bagguley C.L."/>
            <person name="Bailey J."/>
            <person name="Banerjee R."/>
            <person name="Barker D.J."/>
            <person name="Barlow K.F."/>
            <person name="Bates K."/>
            <person name="Beasley H."/>
            <person name="Beasley O."/>
            <person name="Bird C.P."/>
            <person name="Bray-Allen S."/>
            <person name="Brown A.J."/>
            <person name="Brown J.Y."/>
            <person name="Burford D."/>
            <person name="Burrill W."/>
            <person name="Burton J."/>
            <person name="Carder C."/>
            <person name="Carter N.P."/>
            <person name="Chapman J.C."/>
            <person name="Chen Y."/>
            <person name="Clarke G."/>
            <person name="Clark S.Y."/>
            <person name="Clee C.M."/>
            <person name="Clegg S."/>
            <person name="Collier R.E."/>
            <person name="Corby N."/>
            <person name="Crosier M."/>
            <person name="Cummings A.T."/>
            <person name="Davies J."/>
            <person name="Dhami P."/>
            <person name="Dunn M."/>
            <person name="Dutta I."/>
            <person name="Dyer L.W."/>
            <person name="Earthrowl M.E."/>
            <person name="Faulkner L."/>
            <person name="Fleming C.J."/>
            <person name="Frankish A."/>
            <person name="Frankland J.A."/>
            <person name="French L."/>
            <person name="Fricker D.G."/>
            <person name="Garner P."/>
            <person name="Garnett J."/>
            <person name="Ghori J."/>
            <person name="Gilbert J.G.R."/>
            <person name="Glison C."/>
            <person name="Grafham D.V."/>
            <person name="Gribble S."/>
            <person name="Griffiths C."/>
            <person name="Griffiths-Jones S."/>
            <person name="Grocock R."/>
            <person name="Guy J."/>
            <person name="Hall R.E."/>
            <person name="Hammond S."/>
            <person name="Harley J.L."/>
            <person name="Harrison E.S.I."/>
            <person name="Hart E.A."/>
            <person name="Heath P.D."/>
            <person name="Henderson C.D."/>
            <person name="Hopkins B.L."/>
            <person name="Howard P.J."/>
            <person name="Howden P.J."/>
            <person name="Huckle E."/>
            <person name="Johnson C."/>
            <person name="Johnson D."/>
            <person name="Joy A.A."/>
            <person name="Kay M."/>
            <person name="Keenan S."/>
            <person name="Kershaw J.K."/>
            <person name="Kimberley A.M."/>
            <person name="King A."/>
            <person name="Knights A."/>
            <person name="Laird G.K."/>
            <person name="Langford C."/>
            <person name="Lawlor S."/>
            <person name="Leongamornlert D.A."/>
            <person name="Leversha M."/>
            <person name="Lloyd C."/>
            <person name="Lloyd D.M."/>
            <person name="Lovell J."/>
            <person name="Martin S."/>
            <person name="Mashreghi-Mohammadi M."/>
            <person name="Matthews L."/>
            <person name="McLaren S."/>
            <person name="McLay K.E."/>
            <person name="McMurray A."/>
            <person name="Milne S."/>
            <person name="Nickerson T."/>
            <person name="Nisbett J."/>
            <person name="Nordsiek G."/>
            <person name="Pearce A.V."/>
            <person name="Peck A.I."/>
            <person name="Porter K.M."/>
            <person name="Pandian R."/>
            <person name="Pelan S."/>
            <person name="Phillimore B."/>
            <person name="Povey S."/>
            <person name="Ramsey Y."/>
            <person name="Rand V."/>
            <person name="Scharfe M."/>
            <person name="Sehra H.K."/>
            <person name="Shownkeen R."/>
            <person name="Sims S.K."/>
            <person name="Skuce C.D."/>
            <person name="Smith M."/>
            <person name="Steward C.A."/>
            <person name="Swarbreck D."/>
            <person name="Sycamore N."/>
            <person name="Tester J."/>
            <person name="Thorpe A."/>
            <person name="Tracey A."/>
            <person name="Tromans A."/>
            <person name="Thomas D.W."/>
            <person name="Wall M."/>
            <person name="Wallis J.M."/>
            <person name="West A.P."/>
            <person name="Whitehead S.L."/>
            <person name="Willey D.L."/>
            <person name="Williams S.A."/>
            <person name="Wilming L."/>
            <person name="Wray P.W."/>
            <person name="Young L."/>
            <person name="Ashurst J.L."/>
            <person name="Coulson A."/>
            <person name="Blocker H."/>
            <person name="Durbin R.M."/>
            <person name="Sulston J.E."/>
            <person name="Hubbard T."/>
            <person name="Jackson M.J."/>
            <person name="Bentley D.R."/>
            <person name="Beck S."/>
            <person name="Rogers J."/>
            <person name="Dunham I."/>
        </authorList>
    </citation>
    <scope>NUCLEOTIDE SEQUENCE [LARGE SCALE GENOMIC DNA]</scope>
</reference>
<reference key="4">
    <citation type="submission" date="2005-07" db="EMBL/GenBank/DDBJ databases">
        <authorList>
            <person name="Mural R.J."/>
            <person name="Istrail S."/>
            <person name="Sutton G."/>
            <person name="Florea L."/>
            <person name="Halpern A.L."/>
            <person name="Mobarry C.M."/>
            <person name="Lippert R."/>
            <person name="Walenz B."/>
            <person name="Shatkay H."/>
            <person name="Dew I."/>
            <person name="Miller J.R."/>
            <person name="Flanigan M.J."/>
            <person name="Edwards N.J."/>
            <person name="Bolanos R."/>
            <person name="Fasulo D."/>
            <person name="Halldorsson B.V."/>
            <person name="Hannenhalli S."/>
            <person name="Turner R."/>
            <person name="Yooseph S."/>
            <person name="Lu F."/>
            <person name="Nusskern D.R."/>
            <person name="Shue B.C."/>
            <person name="Zheng X.H."/>
            <person name="Zhong F."/>
            <person name="Delcher A.L."/>
            <person name="Huson D.H."/>
            <person name="Kravitz S.A."/>
            <person name="Mouchard L."/>
            <person name="Reinert K."/>
            <person name="Remington K.A."/>
            <person name="Clark A.G."/>
            <person name="Waterman M.S."/>
            <person name="Eichler E.E."/>
            <person name="Adams M.D."/>
            <person name="Hunkapiller M.W."/>
            <person name="Myers E.W."/>
            <person name="Venter J.C."/>
        </authorList>
    </citation>
    <scope>NUCLEOTIDE SEQUENCE [LARGE SCALE GENOMIC DNA]</scope>
</reference>
<reference key="5">
    <citation type="journal article" date="2004" name="Genome Res.">
        <title>The status, quality, and expansion of the NIH full-length cDNA project: the Mammalian Gene Collection (MGC).</title>
        <authorList>
            <consortium name="The MGC Project Team"/>
        </authorList>
    </citation>
    <scope>NUCLEOTIDE SEQUENCE [LARGE SCALE MRNA]</scope>
    <source>
        <tissue>Lung</tissue>
    </source>
</reference>
<reference key="6">
    <citation type="journal article" date="1996" name="J. Biochem.">
        <title>Characterization of ficolins as novel elastin-binding proteins and molecular cloning of human ficolin-1.</title>
        <authorList>
            <person name="Harumiya S."/>
            <person name="Takeda K."/>
            <person name="Sugiura T."/>
            <person name="Fukumoto Y."/>
            <person name="Tachikawa H."/>
            <person name="Miyazono K."/>
            <person name="Fujimoto D."/>
            <person name="Ichijo H."/>
        </authorList>
    </citation>
    <scope>NUCLEOTIDE SEQUENCE [MRNA] OF 3-326</scope>
    <source>
        <tissue>Uterus</tissue>
    </source>
</reference>
<reference key="7">
    <citation type="journal article" date="2004" name="Protein Sci.">
        <title>Signal peptide prediction based on analysis of experimentally verified cleavage sites.</title>
        <authorList>
            <person name="Zhang Z."/>
            <person name="Henzel W.J."/>
        </authorList>
    </citation>
    <scope>PROTEIN SEQUENCE OF 30-44</scope>
</reference>
<reference key="8">
    <citation type="journal article" date="2010" name="J. Immunol.">
        <title>Secreted M-ficolin anchors onto monocyte transmembrane G protein-coupled receptor 43 and cross talks with plasma C-reactive protein to mediate immune signaling and regulate host defense.</title>
        <authorList>
            <person name="Zhang J."/>
            <person name="Yang L."/>
            <person name="Ang Z."/>
            <person name="Yoong S.L."/>
            <person name="Tran T.T."/>
            <person name="Anand G.S."/>
            <person name="Tan N.S."/>
            <person name="Ho B."/>
            <person name="Ding J.L."/>
        </authorList>
    </citation>
    <scope>FUNCTION</scope>
    <scope>SUBCELLULAR LOCATION</scope>
    <scope>INTERACTION WITH CRP AND FFAR2</scope>
</reference>
<reference key="9">
    <citation type="journal article" date="2010" name="J. Leukoc. Biol.">
        <title>Tethering of Ficolin-1 to cell surfaces through recognition of sialic acid by the fibrinogen-like domain.</title>
        <authorList>
            <person name="Honore C."/>
            <person name="Rorvig S."/>
            <person name="Hummelshoj T."/>
            <person name="Skjoedt M.O."/>
            <person name="Borregaard N."/>
            <person name="Garred P."/>
        </authorList>
    </citation>
    <scope>TISSUE SPECIFICITY</scope>
    <scope>SUBCELLULAR LOCATION</scope>
</reference>
<reference key="10">
    <citation type="journal article" date="2007" name="J. Biol. Chem.">
        <title>Trivalent recognition unit of innate immunity system: crystal structure of trimeric human M-ficolin fibrinogen-like domain.</title>
        <authorList>
            <person name="Tanio M."/>
            <person name="Kondo S."/>
            <person name="Sugio S."/>
            <person name="Kohno T."/>
        </authorList>
    </citation>
    <scope>X-RAY CRYSTALLOGRAPHY (1.9 ANGSTROMS) OF 115-326 IN COMPLEX WITH CALCIUM</scope>
    <scope>SUBUNIT</scope>
    <scope>DISULFIDE BONDS</scope>
    <scope>CALCIUM-BINDING SITES</scope>
    <scope>PH-DEPENDENCY</scope>
    <scope>DOMAIN</scope>
</reference>
<reference key="11">
    <citation type="journal article" date="2007" name="J. Biol. Chem.">
        <title>Structural basis for innate immune sensing by M-ficolin and its control by a pH-dependent conformational switch.</title>
        <authorList>
            <person name="Garlatti V."/>
            <person name="Martin L."/>
            <person name="Gout E."/>
            <person name="Reiser J.B."/>
            <person name="Fujita T."/>
            <person name="Arlaud G.J."/>
            <person name="Thielens N.M."/>
            <person name="Gaboriaud C."/>
        </authorList>
    </citation>
    <scope>X-RAY CRYSTALLOGRAPHY (1.52 ANGSTROMS) OF 109-326 IN COMPLEX WITH CALCIUM AND CARBOHYDRATE</scope>
    <scope>SUBUNIT</scope>
    <scope>DISULFIDE BONDS</scope>
    <scope>CALCIUM-BINDING SITES</scope>
    <scope>PH-DEPENDENCY</scope>
    <scope>DOMAIN</scope>
</reference>
<reference key="12">
    <citation type="journal article" date="2010" name="J. Biol. Chem.">
        <title>Carbohydrate recognition properties of human ficolins: glycan array screening reveals the sialic acid binding specificity of M-ficolin.</title>
        <authorList>
            <person name="Gout E."/>
            <person name="Garlatti V."/>
            <person name="Smith D.F."/>
            <person name="Lacroix M."/>
            <person name="Dumestre-Perard C."/>
            <person name="Lunardi T."/>
            <person name="Martin L."/>
            <person name="Cesbron J.Y."/>
            <person name="Arlaud G.J."/>
            <person name="Gaboriaud C."/>
            <person name="Thielens N.M."/>
        </authorList>
    </citation>
    <scope>X-RAY CRYSTALLOGRAPHY (1.21 ANGSTROMS) OF 110-326 IN COMPLEX WITH CALCIUM</scope>
    <scope>DISULFIDE BONDS</scope>
    <scope>FUNCTION</scope>
    <scope>SUBUNIT</scope>
    <scope>SUBSTRATE SPECIFICITY</scope>
    <scope>CALCIUM-BINDING SITES</scope>
    <scope>MUTAGENESIS OF GLY-250; ALA-285 AND TYR-300</scope>
</reference>
<reference key="13">
    <citation type="journal article" date="2006" name="Science">
        <title>The consensus coding sequences of human breast and colorectal cancers.</title>
        <authorList>
            <person name="Sjoeblom T."/>
            <person name="Jones S."/>
            <person name="Wood L.D."/>
            <person name="Parsons D.W."/>
            <person name="Lin J."/>
            <person name="Barber T.D."/>
            <person name="Mandelker D."/>
            <person name="Leary R.J."/>
            <person name="Ptak J."/>
            <person name="Silliman N."/>
            <person name="Szabo S."/>
            <person name="Buckhaults P."/>
            <person name="Farrell C."/>
            <person name="Meeh P."/>
            <person name="Markowitz S.D."/>
            <person name="Willis J."/>
            <person name="Dawson D."/>
            <person name="Willson J.K.V."/>
            <person name="Gazdar A.F."/>
            <person name="Hartigan J."/>
            <person name="Wu L."/>
            <person name="Liu C."/>
            <person name="Parmigiani G."/>
            <person name="Park B.H."/>
            <person name="Bachman K.E."/>
            <person name="Papadopoulos N."/>
            <person name="Vogelstein B."/>
            <person name="Kinzler K.W."/>
            <person name="Velculescu V.E."/>
        </authorList>
    </citation>
    <scope>VARIANT [LARGE SCALE ANALYSIS] CYS-175</scope>
</reference>